<evidence type="ECO:0000255" key="1">
    <source>
        <dbReference type="HAMAP-Rule" id="MF_00091"/>
    </source>
</evidence>
<name>LUXS_STRA1</name>
<proteinExistence type="inferred from homology"/>
<reference key="1">
    <citation type="journal article" date="2005" name="Proc. Natl. Acad. Sci. U.S.A.">
        <title>Genome analysis of multiple pathogenic isolates of Streptococcus agalactiae: implications for the microbial 'pan-genome'.</title>
        <authorList>
            <person name="Tettelin H."/>
            <person name="Masignani V."/>
            <person name="Cieslewicz M.J."/>
            <person name="Donati C."/>
            <person name="Medini D."/>
            <person name="Ward N.L."/>
            <person name="Angiuoli S.V."/>
            <person name="Crabtree J."/>
            <person name="Jones A.L."/>
            <person name="Durkin A.S."/>
            <person name="DeBoy R.T."/>
            <person name="Davidsen T.M."/>
            <person name="Mora M."/>
            <person name="Scarselli M."/>
            <person name="Margarit y Ros I."/>
            <person name="Peterson J.D."/>
            <person name="Hauser C.R."/>
            <person name="Sundaram J.P."/>
            <person name="Nelson W.C."/>
            <person name="Madupu R."/>
            <person name="Brinkac L.M."/>
            <person name="Dodson R.J."/>
            <person name="Rosovitz M.J."/>
            <person name="Sullivan S.A."/>
            <person name="Daugherty S.C."/>
            <person name="Haft D.H."/>
            <person name="Selengut J."/>
            <person name="Gwinn M.L."/>
            <person name="Zhou L."/>
            <person name="Zafar N."/>
            <person name="Khouri H."/>
            <person name="Radune D."/>
            <person name="Dimitrov G."/>
            <person name="Watkins K."/>
            <person name="O'Connor K.J."/>
            <person name="Smith S."/>
            <person name="Utterback T.R."/>
            <person name="White O."/>
            <person name="Rubens C.E."/>
            <person name="Grandi G."/>
            <person name="Madoff L.C."/>
            <person name="Kasper D.L."/>
            <person name="Telford J.L."/>
            <person name="Wessels M.R."/>
            <person name="Rappuoli R."/>
            <person name="Fraser C.M."/>
        </authorList>
    </citation>
    <scope>NUCLEOTIDE SEQUENCE [LARGE SCALE GENOMIC DNA]</scope>
    <source>
        <strain>ATCC 27591 / A909 / CDC SS700</strain>
    </source>
</reference>
<keyword id="KW-0071">Autoinducer synthesis</keyword>
<keyword id="KW-0408">Iron</keyword>
<keyword id="KW-0456">Lyase</keyword>
<keyword id="KW-0479">Metal-binding</keyword>
<keyword id="KW-0673">Quorum sensing</keyword>
<accession>Q3K375</accession>
<sequence length="160" mass="17736">MTKEVVVESFELDHTIVKAPYVRLISEEVGPVGDIITNFDIRLIQPNENAIDTAGLHTIEHLLAKLIRQRINGLIDCSPFGCRTGFHMIMWGKQDATEIAKVIKSSLEAIAGGVTWEDVPGTTIESCGNYKDHSLHSAQEWAKLILSQGISDNAFERHIV</sequence>
<feature type="chain" id="PRO_0000298040" description="S-ribosylhomocysteine lyase">
    <location>
        <begin position="1"/>
        <end position="160"/>
    </location>
</feature>
<feature type="binding site" evidence="1">
    <location>
        <position position="57"/>
    </location>
    <ligand>
        <name>Fe cation</name>
        <dbReference type="ChEBI" id="CHEBI:24875"/>
    </ligand>
</feature>
<feature type="binding site" evidence="1">
    <location>
        <position position="61"/>
    </location>
    <ligand>
        <name>Fe cation</name>
        <dbReference type="ChEBI" id="CHEBI:24875"/>
    </ligand>
</feature>
<feature type="binding site" evidence="1">
    <location>
        <position position="127"/>
    </location>
    <ligand>
        <name>Fe cation</name>
        <dbReference type="ChEBI" id="CHEBI:24875"/>
    </ligand>
</feature>
<comment type="function">
    <text evidence="1">Involved in the synthesis of autoinducer 2 (AI-2) which is secreted by bacteria and is used to communicate both the cell density and the metabolic potential of the environment. The regulation of gene expression in response to changes in cell density is called quorum sensing. Catalyzes the transformation of S-ribosylhomocysteine (RHC) to homocysteine (HC) and 4,5-dihydroxy-2,3-pentadione (DPD).</text>
</comment>
<comment type="catalytic activity">
    <reaction evidence="1">
        <text>S-(5-deoxy-D-ribos-5-yl)-L-homocysteine = (S)-4,5-dihydroxypentane-2,3-dione + L-homocysteine</text>
        <dbReference type="Rhea" id="RHEA:17753"/>
        <dbReference type="ChEBI" id="CHEBI:29484"/>
        <dbReference type="ChEBI" id="CHEBI:58195"/>
        <dbReference type="ChEBI" id="CHEBI:58199"/>
        <dbReference type="EC" id="4.4.1.21"/>
    </reaction>
</comment>
<comment type="cofactor">
    <cofactor evidence="1">
        <name>Fe cation</name>
        <dbReference type="ChEBI" id="CHEBI:24875"/>
    </cofactor>
    <text evidence="1">Binds 1 Fe cation per subunit.</text>
</comment>
<comment type="subunit">
    <text evidence="1">Homodimer.</text>
</comment>
<comment type="similarity">
    <text evidence="1">Belongs to the LuxS family.</text>
</comment>
<gene>
    <name evidence="1" type="primary">luxS</name>
    <name type="ordered locus">SAK_0376</name>
</gene>
<dbReference type="EC" id="4.4.1.21" evidence="1"/>
<dbReference type="EMBL" id="CP000114">
    <property type="protein sequence ID" value="ABA45384.1"/>
    <property type="molecule type" value="Genomic_DNA"/>
</dbReference>
<dbReference type="RefSeq" id="WP_000159885.1">
    <property type="nucleotide sequence ID" value="NC_007432.1"/>
</dbReference>
<dbReference type="SMR" id="Q3K375"/>
<dbReference type="KEGG" id="sak:SAK_0376"/>
<dbReference type="HOGENOM" id="CLU_107531_2_1_9"/>
<dbReference type="GO" id="GO:0005506">
    <property type="term" value="F:iron ion binding"/>
    <property type="evidence" value="ECO:0007669"/>
    <property type="project" value="InterPro"/>
</dbReference>
<dbReference type="GO" id="GO:0043768">
    <property type="term" value="F:S-ribosylhomocysteine lyase activity"/>
    <property type="evidence" value="ECO:0007669"/>
    <property type="project" value="UniProtKB-UniRule"/>
</dbReference>
<dbReference type="GO" id="GO:0009372">
    <property type="term" value="P:quorum sensing"/>
    <property type="evidence" value="ECO:0007669"/>
    <property type="project" value="UniProtKB-UniRule"/>
</dbReference>
<dbReference type="Gene3D" id="3.30.1360.80">
    <property type="entry name" value="S-ribosylhomocysteinase (LuxS)"/>
    <property type="match status" value="1"/>
</dbReference>
<dbReference type="HAMAP" id="MF_00091">
    <property type="entry name" value="LuxS"/>
    <property type="match status" value="1"/>
</dbReference>
<dbReference type="InterPro" id="IPR037005">
    <property type="entry name" value="LuxS_sf"/>
</dbReference>
<dbReference type="InterPro" id="IPR011249">
    <property type="entry name" value="Metalloenz_LuxS/M16"/>
</dbReference>
<dbReference type="InterPro" id="IPR003815">
    <property type="entry name" value="S-ribosylhomocysteinase"/>
</dbReference>
<dbReference type="NCBIfam" id="NF002607">
    <property type="entry name" value="PRK02260.2-5"/>
    <property type="match status" value="1"/>
</dbReference>
<dbReference type="NCBIfam" id="NF002608">
    <property type="entry name" value="PRK02260.3-1"/>
    <property type="match status" value="1"/>
</dbReference>
<dbReference type="PANTHER" id="PTHR35799">
    <property type="entry name" value="S-RIBOSYLHOMOCYSTEINE LYASE"/>
    <property type="match status" value="1"/>
</dbReference>
<dbReference type="PANTHER" id="PTHR35799:SF1">
    <property type="entry name" value="S-RIBOSYLHOMOCYSTEINE LYASE"/>
    <property type="match status" value="1"/>
</dbReference>
<dbReference type="Pfam" id="PF02664">
    <property type="entry name" value="LuxS"/>
    <property type="match status" value="1"/>
</dbReference>
<dbReference type="PIRSF" id="PIRSF006160">
    <property type="entry name" value="AI2"/>
    <property type="match status" value="1"/>
</dbReference>
<dbReference type="PRINTS" id="PR01487">
    <property type="entry name" value="LUXSPROTEIN"/>
</dbReference>
<dbReference type="SUPFAM" id="SSF63411">
    <property type="entry name" value="LuxS/MPP-like metallohydrolase"/>
    <property type="match status" value="1"/>
</dbReference>
<organism>
    <name type="scientific">Streptococcus agalactiae serotype Ia (strain ATCC 27591 / A909 / CDC SS700)</name>
    <dbReference type="NCBI Taxonomy" id="205921"/>
    <lineage>
        <taxon>Bacteria</taxon>
        <taxon>Bacillati</taxon>
        <taxon>Bacillota</taxon>
        <taxon>Bacilli</taxon>
        <taxon>Lactobacillales</taxon>
        <taxon>Streptococcaceae</taxon>
        <taxon>Streptococcus</taxon>
    </lineage>
</organism>
<protein>
    <recommendedName>
        <fullName evidence="1">S-ribosylhomocysteine lyase</fullName>
        <ecNumber evidence="1">4.4.1.21</ecNumber>
    </recommendedName>
    <alternativeName>
        <fullName evidence="1">AI-2 synthesis protein</fullName>
    </alternativeName>
    <alternativeName>
        <fullName evidence="1">Autoinducer-2 production protein LuxS</fullName>
    </alternativeName>
</protein>